<reference key="1">
    <citation type="journal article" date="2003" name="Nature">
        <title>The genome of a motile marine Synechococcus.</title>
        <authorList>
            <person name="Palenik B."/>
            <person name="Brahamsha B."/>
            <person name="Larimer F.W."/>
            <person name="Land M.L."/>
            <person name="Hauser L."/>
            <person name="Chain P."/>
            <person name="Lamerdin J.E."/>
            <person name="Regala W."/>
            <person name="Allen E.E."/>
            <person name="McCarren J."/>
            <person name="Paulsen I.T."/>
            <person name="Dufresne A."/>
            <person name="Partensky F."/>
            <person name="Webb E.A."/>
            <person name="Waterbury J."/>
        </authorList>
    </citation>
    <scope>NUCLEOTIDE SEQUENCE [LARGE SCALE GENOMIC DNA]</scope>
    <source>
        <strain>WH8102</strain>
    </source>
</reference>
<proteinExistence type="inferred from homology"/>
<protein>
    <recommendedName>
        <fullName evidence="1">Large ribosomal subunit protein bL35</fullName>
    </recommendedName>
    <alternativeName>
        <fullName evidence="2">50S ribosomal protein L35</fullName>
    </alternativeName>
</protein>
<feature type="chain" id="PRO_0000177439" description="Large ribosomal subunit protein bL35">
    <location>
        <begin position="1"/>
        <end position="65"/>
    </location>
</feature>
<accession>Q7UA42</accession>
<evidence type="ECO:0000255" key="1">
    <source>
        <dbReference type="HAMAP-Rule" id="MF_00514"/>
    </source>
</evidence>
<evidence type="ECO:0000305" key="2"/>
<organism>
    <name type="scientific">Parasynechococcus marenigrum (strain WH8102)</name>
    <dbReference type="NCBI Taxonomy" id="84588"/>
    <lineage>
        <taxon>Bacteria</taxon>
        <taxon>Bacillati</taxon>
        <taxon>Cyanobacteriota</taxon>
        <taxon>Cyanophyceae</taxon>
        <taxon>Synechococcales</taxon>
        <taxon>Prochlorococcaceae</taxon>
        <taxon>Parasynechococcus</taxon>
        <taxon>Parasynechococcus marenigrum</taxon>
    </lineage>
</organism>
<comment type="similarity">
    <text evidence="1">Belongs to the bacterial ribosomal protein bL35 family.</text>
</comment>
<name>RL35_PARMW</name>
<dbReference type="EMBL" id="BX569689">
    <property type="protein sequence ID" value="CAE06573.1"/>
    <property type="molecule type" value="Genomic_DNA"/>
</dbReference>
<dbReference type="RefSeq" id="WP_011126936.1">
    <property type="nucleotide sequence ID" value="NC_005070.1"/>
</dbReference>
<dbReference type="SMR" id="Q7UA42"/>
<dbReference type="STRING" id="84588.SYNW0058"/>
<dbReference type="KEGG" id="syw:SYNW0058"/>
<dbReference type="eggNOG" id="COG0291">
    <property type="taxonomic scope" value="Bacteria"/>
</dbReference>
<dbReference type="HOGENOM" id="CLU_169643_4_0_3"/>
<dbReference type="Proteomes" id="UP000001422">
    <property type="component" value="Chromosome"/>
</dbReference>
<dbReference type="GO" id="GO:0022625">
    <property type="term" value="C:cytosolic large ribosomal subunit"/>
    <property type="evidence" value="ECO:0007669"/>
    <property type="project" value="TreeGrafter"/>
</dbReference>
<dbReference type="GO" id="GO:0003735">
    <property type="term" value="F:structural constituent of ribosome"/>
    <property type="evidence" value="ECO:0007669"/>
    <property type="project" value="InterPro"/>
</dbReference>
<dbReference type="GO" id="GO:0006412">
    <property type="term" value="P:translation"/>
    <property type="evidence" value="ECO:0007669"/>
    <property type="project" value="UniProtKB-UniRule"/>
</dbReference>
<dbReference type="FunFam" id="4.10.410.60:FF:000001">
    <property type="entry name" value="50S ribosomal protein L35"/>
    <property type="match status" value="1"/>
</dbReference>
<dbReference type="Gene3D" id="4.10.410.60">
    <property type="match status" value="1"/>
</dbReference>
<dbReference type="HAMAP" id="MF_00514">
    <property type="entry name" value="Ribosomal_bL35"/>
    <property type="match status" value="1"/>
</dbReference>
<dbReference type="InterPro" id="IPR001706">
    <property type="entry name" value="Ribosomal_bL35"/>
</dbReference>
<dbReference type="InterPro" id="IPR021137">
    <property type="entry name" value="Ribosomal_bL35-like"/>
</dbReference>
<dbReference type="InterPro" id="IPR018265">
    <property type="entry name" value="Ribosomal_bL35_CS"/>
</dbReference>
<dbReference type="InterPro" id="IPR037229">
    <property type="entry name" value="Ribosomal_bL35_sf"/>
</dbReference>
<dbReference type="NCBIfam" id="TIGR00001">
    <property type="entry name" value="rpmI_bact"/>
    <property type="match status" value="1"/>
</dbReference>
<dbReference type="PANTHER" id="PTHR33343">
    <property type="entry name" value="54S RIBOSOMAL PROTEIN BL35M"/>
    <property type="match status" value="1"/>
</dbReference>
<dbReference type="PANTHER" id="PTHR33343:SF1">
    <property type="entry name" value="LARGE RIBOSOMAL SUBUNIT PROTEIN BL35M"/>
    <property type="match status" value="1"/>
</dbReference>
<dbReference type="Pfam" id="PF01632">
    <property type="entry name" value="Ribosomal_L35p"/>
    <property type="match status" value="1"/>
</dbReference>
<dbReference type="PRINTS" id="PR00064">
    <property type="entry name" value="RIBOSOMALL35"/>
</dbReference>
<dbReference type="SUPFAM" id="SSF143034">
    <property type="entry name" value="L35p-like"/>
    <property type="match status" value="1"/>
</dbReference>
<dbReference type="PROSITE" id="PS00936">
    <property type="entry name" value="RIBOSOMAL_L35"/>
    <property type="match status" value="1"/>
</dbReference>
<sequence>MPKLKTRKAAAKRFKATGTGKFTRRRAFRNHLLDHKTPKQKRHLATKAVVHETDELRVVRMLPYA</sequence>
<keyword id="KW-0687">Ribonucleoprotein</keyword>
<keyword id="KW-0689">Ribosomal protein</keyword>
<gene>
    <name evidence="1" type="primary">rpmI</name>
    <name evidence="1" type="synonym">rpl35</name>
    <name type="ordered locus">SYNW0058</name>
</gene>